<sequence length="258" mass="27554">MNAISLAVDQFVAVLTIHNPPANALSSRILEELSSCLDQCETDAGVRSIIIHGEGRFFSAGADIKEFTSLKGNEDSSLLAERGQQLMERIESFPKPIIAAIHGAALGGGLELAMACHIRIAAEDAKLGLPELNLGIIPGFAGTQRLPRYVGTAKALELIGSGEPISGKEALDLGLVSIGAKDEAEVIEKAKALAAKFAEKSPQTLASLLELLYSNKVYSYEGSLKLEAKRFGEAFESEDAKEGIQAFLEKRKPQFKGE</sequence>
<keyword id="KW-0276">Fatty acid metabolism</keyword>
<keyword id="KW-0442">Lipid degradation</keyword>
<keyword id="KW-0443">Lipid metabolism</keyword>
<keyword id="KW-0456">Lyase</keyword>
<keyword id="KW-1185">Reference proteome</keyword>
<evidence type="ECO:0000269" key="1">
    <source>
    </source>
</evidence>
<evidence type="ECO:0000305" key="2"/>
<organism>
    <name type="scientific">Bacillus subtilis (strain 168)</name>
    <dbReference type="NCBI Taxonomy" id="224308"/>
    <lineage>
        <taxon>Bacteria</taxon>
        <taxon>Bacillati</taxon>
        <taxon>Bacillota</taxon>
        <taxon>Bacilli</taxon>
        <taxon>Bacillales</taxon>
        <taxon>Bacillaceae</taxon>
        <taxon>Bacillus</taxon>
    </lineage>
</organism>
<name>FADB_BACSU</name>
<protein>
    <recommendedName>
        <fullName>Probable enoyl-CoA hydratase</fullName>
        <ecNumber>4.2.1.17</ecNumber>
    </recommendedName>
</protein>
<dbReference type="EC" id="4.2.1.17"/>
<dbReference type="EMBL" id="Z75208">
    <property type="protein sequence ID" value="CAA99573.1"/>
    <property type="molecule type" value="Genomic_DNA"/>
</dbReference>
<dbReference type="EMBL" id="AL009126">
    <property type="protein sequence ID" value="CAB14814.1"/>
    <property type="molecule type" value="Genomic_DNA"/>
</dbReference>
<dbReference type="PIR" id="G69985">
    <property type="entry name" value="G69985"/>
</dbReference>
<dbReference type="RefSeq" id="NP_390732.1">
    <property type="nucleotide sequence ID" value="NC_000964.3"/>
</dbReference>
<dbReference type="RefSeq" id="WP_003229549.1">
    <property type="nucleotide sequence ID" value="NZ_OZ025638.1"/>
</dbReference>
<dbReference type="SMR" id="P94549"/>
<dbReference type="FunCoup" id="P94549">
    <property type="interactions" value="62"/>
</dbReference>
<dbReference type="STRING" id="224308.BSU28540"/>
<dbReference type="jPOST" id="P94549"/>
<dbReference type="PaxDb" id="224308-BSU28540"/>
<dbReference type="EnsemblBacteria" id="CAB14814">
    <property type="protein sequence ID" value="CAB14814"/>
    <property type="gene ID" value="BSU_28540"/>
</dbReference>
<dbReference type="GeneID" id="937448"/>
<dbReference type="KEGG" id="bsu:BSU28540"/>
<dbReference type="PATRIC" id="fig|224308.179.peg.3101"/>
<dbReference type="eggNOG" id="COG1024">
    <property type="taxonomic scope" value="Bacteria"/>
</dbReference>
<dbReference type="InParanoid" id="P94549"/>
<dbReference type="OrthoDB" id="9775794at2"/>
<dbReference type="PhylomeDB" id="P94549"/>
<dbReference type="BioCyc" id="BSUB:BSU28540-MONOMER"/>
<dbReference type="UniPathway" id="UPA00659"/>
<dbReference type="Proteomes" id="UP000001570">
    <property type="component" value="Chromosome"/>
</dbReference>
<dbReference type="GO" id="GO:0004300">
    <property type="term" value="F:enoyl-CoA hydratase activity"/>
    <property type="evidence" value="ECO:0007669"/>
    <property type="project" value="UniProtKB-EC"/>
</dbReference>
<dbReference type="GO" id="GO:0006635">
    <property type="term" value="P:fatty acid beta-oxidation"/>
    <property type="evidence" value="ECO:0000318"/>
    <property type="project" value="GO_Central"/>
</dbReference>
<dbReference type="CDD" id="cd06558">
    <property type="entry name" value="crotonase-like"/>
    <property type="match status" value="1"/>
</dbReference>
<dbReference type="FunFam" id="3.90.226.10:FF:000009">
    <property type="entry name" value="Carnitinyl-CoA dehydratase"/>
    <property type="match status" value="1"/>
</dbReference>
<dbReference type="Gene3D" id="3.90.226.10">
    <property type="entry name" value="2-enoyl-CoA Hydratase, Chain A, domain 1"/>
    <property type="match status" value="1"/>
</dbReference>
<dbReference type="InterPro" id="IPR029045">
    <property type="entry name" value="ClpP/crotonase-like_dom_sf"/>
</dbReference>
<dbReference type="InterPro" id="IPR018376">
    <property type="entry name" value="Enoyl-CoA_hyd/isom_CS"/>
</dbReference>
<dbReference type="InterPro" id="IPR001753">
    <property type="entry name" value="Enoyl-CoA_hydra/iso"/>
</dbReference>
<dbReference type="NCBIfam" id="NF005803">
    <property type="entry name" value="PRK07658.1"/>
    <property type="match status" value="1"/>
</dbReference>
<dbReference type="PANTHER" id="PTHR11941">
    <property type="entry name" value="ENOYL-COA HYDRATASE-RELATED"/>
    <property type="match status" value="1"/>
</dbReference>
<dbReference type="PANTHER" id="PTHR11941:SF175">
    <property type="entry name" value="ENOYL-COA HYDRATASE-RELATED"/>
    <property type="match status" value="1"/>
</dbReference>
<dbReference type="Pfam" id="PF00378">
    <property type="entry name" value="ECH_1"/>
    <property type="match status" value="1"/>
</dbReference>
<dbReference type="SUPFAM" id="SSF52096">
    <property type="entry name" value="ClpP/crotonase"/>
    <property type="match status" value="1"/>
</dbReference>
<dbReference type="PROSITE" id="PS00166">
    <property type="entry name" value="ENOYL_COA_HYDRATASE"/>
    <property type="match status" value="1"/>
</dbReference>
<comment type="function">
    <text>Involved in the degradation of long-chain fatty acids.</text>
</comment>
<comment type="catalytic activity">
    <reaction>
        <text>a (3S)-3-hydroxyacyl-CoA = a (2E)-enoyl-CoA + H2O</text>
        <dbReference type="Rhea" id="RHEA:16105"/>
        <dbReference type="ChEBI" id="CHEBI:15377"/>
        <dbReference type="ChEBI" id="CHEBI:57318"/>
        <dbReference type="ChEBI" id="CHEBI:58856"/>
        <dbReference type="EC" id="4.2.1.17"/>
    </reaction>
</comment>
<comment type="catalytic activity">
    <reaction>
        <text>a 4-saturated-(3S)-3-hydroxyacyl-CoA = a (3E)-enoyl-CoA + H2O</text>
        <dbReference type="Rhea" id="RHEA:20724"/>
        <dbReference type="ChEBI" id="CHEBI:15377"/>
        <dbReference type="ChEBI" id="CHEBI:58521"/>
        <dbReference type="ChEBI" id="CHEBI:137480"/>
        <dbReference type="EC" id="4.2.1.17"/>
    </reaction>
</comment>
<comment type="pathway">
    <text>Lipid metabolism; fatty acid beta-oxidation.</text>
</comment>
<comment type="induction">
    <text evidence="1">Repressed by FadR in the absence of LCFAs (fatty acids of 14-20 carbon atoms). When LCFAs are present in the medium, they are converted to long-chain acyl-CoAs, which antagonize FadR as to its binding to fadR boxes on target DNA and thus derepress transcription.</text>
</comment>
<comment type="similarity">
    <text evidence="2">Belongs to the enoyl-CoA hydratase/isomerase family.</text>
</comment>
<proteinExistence type="evidence at transcript level"/>
<feature type="chain" id="PRO_0000360671" description="Probable enoyl-CoA hydratase">
    <location>
        <begin position="1"/>
        <end position="258"/>
    </location>
</feature>
<reference key="1">
    <citation type="journal article" date="1996" name="Microbiology">
        <title>The dnaB-pheA (256 degrees-240 degrees) region of the Bacillus subtilis chromosome containing genes responsible for stress responses, the utilization of plant cell walls and primary metabolism.</title>
        <authorList>
            <person name="Wipat A."/>
            <person name="Carter N."/>
            <person name="Brignell C.S."/>
            <person name="Guy J.B."/>
            <person name="Piper K."/>
            <person name="Sanders J."/>
            <person name="Emmerson P.T."/>
            <person name="Harwood C.R."/>
        </authorList>
    </citation>
    <scope>NUCLEOTIDE SEQUENCE [GENOMIC DNA]</scope>
    <source>
        <strain>168</strain>
    </source>
</reference>
<reference key="2">
    <citation type="journal article" date="1997" name="Nature">
        <title>The complete genome sequence of the Gram-positive bacterium Bacillus subtilis.</title>
        <authorList>
            <person name="Kunst F."/>
            <person name="Ogasawara N."/>
            <person name="Moszer I."/>
            <person name="Albertini A.M."/>
            <person name="Alloni G."/>
            <person name="Azevedo V."/>
            <person name="Bertero M.G."/>
            <person name="Bessieres P."/>
            <person name="Bolotin A."/>
            <person name="Borchert S."/>
            <person name="Borriss R."/>
            <person name="Boursier L."/>
            <person name="Brans A."/>
            <person name="Braun M."/>
            <person name="Brignell S.C."/>
            <person name="Bron S."/>
            <person name="Brouillet S."/>
            <person name="Bruschi C.V."/>
            <person name="Caldwell B."/>
            <person name="Capuano V."/>
            <person name="Carter N.M."/>
            <person name="Choi S.-K."/>
            <person name="Codani J.-J."/>
            <person name="Connerton I.F."/>
            <person name="Cummings N.J."/>
            <person name="Daniel R.A."/>
            <person name="Denizot F."/>
            <person name="Devine K.M."/>
            <person name="Duesterhoeft A."/>
            <person name="Ehrlich S.D."/>
            <person name="Emmerson P.T."/>
            <person name="Entian K.-D."/>
            <person name="Errington J."/>
            <person name="Fabret C."/>
            <person name="Ferrari E."/>
            <person name="Foulger D."/>
            <person name="Fritz C."/>
            <person name="Fujita M."/>
            <person name="Fujita Y."/>
            <person name="Fuma S."/>
            <person name="Galizzi A."/>
            <person name="Galleron N."/>
            <person name="Ghim S.-Y."/>
            <person name="Glaser P."/>
            <person name="Goffeau A."/>
            <person name="Golightly E.J."/>
            <person name="Grandi G."/>
            <person name="Guiseppi G."/>
            <person name="Guy B.J."/>
            <person name="Haga K."/>
            <person name="Haiech J."/>
            <person name="Harwood C.R."/>
            <person name="Henaut A."/>
            <person name="Hilbert H."/>
            <person name="Holsappel S."/>
            <person name="Hosono S."/>
            <person name="Hullo M.-F."/>
            <person name="Itaya M."/>
            <person name="Jones L.-M."/>
            <person name="Joris B."/>
            <person name="Karamata D."/>
            <person name="Kasahara Y."/>
            <person name="Klaerr-Blanchard M."/>
            <person name="Klein C."/>
            <person name="Kobayashi Y."/>
            <person name="Koetter P."/>
            <person name="Koningstein G."/>
            <person name="Krogh S."/>
            <person name="Kumano M."/>
            <person name="Kurita K."/>
            <person name="Lapidus A."/>
            <person name="Lardinois S."/>
            <person name="Lauber J."/>
            <person name="Lazarevic V."/>
            <person name="Lee S.-M."/>
            <person name="Levine A."/>
            <person name="Liu H."/>
            <person name="Masuda S."/>
            <person name="Mauel C."/>
            <person name="Medigue C."/>
            <person name="Medina N."/>
            <person name="Mellado R.P."/>
            <person name="Mizuno M."/>
            <person name="Moestl D."/>
            <person name="Nakai S."/>
            <person name="Noback M."/>
            <person name="Noone D."/>
            <person name="O'Reilly M."/>
            <person name="Ogawa K."/>
            <person name="Ogiwara A."/>
            <person name="Oudega B."/>
            <person name="Park S.-H."/>
            <person name="Parro V."/>
            <person name="Pohl T.M."/>
            <person name="Portetelle D."/>
            <person name="Porwollik S."/>
            <person name="Prescott A.M."/>
            <person name="Presecan E."/>
            <person name="Pujic P."/>
            <person name="Purnelle B."/>
            <person name="Rapoport G."/>
            <person name="Rey M."/>
            <person name="Reynolds S."/>
            <person name="Rieger M."/>
            <person name="Rivolta C."/>
            <person name="Rocha E."/>
            <person name="Roche B."/>
            <person name="Rose M."/>
            <person name="Sadaie Y."/>
            <person name="Sato T."/>
            <person name="Scanlan E."/>
            <person name="Schleich S."/>
            <person name="Schroeter R."/>
            <person name="Scoffone F."/>
            <person name="Sekiguchi J."/>
            <person name="Sekowska A."/>
            <person name="Seror S.J."/>
            <person name="Serror P."/>
            <person name="Shin B.-S."/>
            <person name="Soldo B."/>
            <person name="Sorokin A."/>
            <person name="Tacconi E."/>
            <person name="Takagi T."/>
            <person name="Takahashi H."/>
            <person name="Takemaru K."/>
            <person name="Takeuchi M."/>
            <person name="Tamakoshi A."/>
            <person name="Tanaka T."/>
            <person name="Terpstra P."/>
            <person name="Tognoni A."/>
            <person name="Tosato V."/>
            <person name="Uchiyama S."/>
            <person name="Vandenbol M."/>
            <person name="Vannier F."/>
            <person name="Vassarotti A."/>
            <person name="Viari A."/>
            <person name="Wambutt R."/>
            <person name="Wedler E."/>
            <person name="Wedler H."/>
            <person name="Weitzenegger T."/>
            <person name="Winters P."/>
            <person name="Wipat A."/>
            <person name="Yamamoto H."/>
            <person name="Yamane K."/>
            <person name="Yasumoto K."/>
            <person name="Yata K."/>
            <person name="Yoshida K."/>
            <person name="Yoshikawa H.-F."/>
            <person name="Zumstein E."/>
            <person name="Yoshikawa H."/>
            <person name="Danchin A."/>
        </authorList>
    </citation>
    <scope>NUCLEOTIDE SEQUENCE [LARGE SCALE GENOMIC DNA]</scope>
    <source>
        <strain>168</strain>
    </source>
</reference>
<reference key="3">
    <citation type="journal article" date="2007" name="J. Biol. Chem.">
        <title>Organization and function of the YsiA regulon of Bacillus subtilis involved in fatty acid degradation.</title>
        <authorList>
            <person name="Matsuoka H."/>
            <person name="Hirooka K."/>
            <person name="Fujita Y."/>
        </authorList>
    </citation>
    <scope>GENE NAME</scope>
    <scope>INDUCTION</scope>
    <source>
        <strain>168</strain>
    </source>
</reference>
<accession>P94549</accession>
<accession>Q795X7</accession>
<gene>
    <name type="primary">fadB</name>
    <name type="synonym">ysiB</name>
    <name type="ordered locus">BSU28540</name>
</gene>